<comment type="function">
    <text evidence="1 10">FAD-linked oxidoreductase; part of the gene cluster that mediates the biosynthesis of patulin, an acetate-derived tetraketide mycotoxin produced by several fungal species that shows antimicrobial properties against several bacteria (By similarity). PatO acts with patJ in the vacuole to convert gentisyl alcohol to isoepoxydon (By similarity). The pathway begins with the synthesis of 6-methylsalicylic acid by the polyketide synthase (PKS) patK via condensation of acetate and malonate units. The 6-methylsalicylic acid decarboxylase patG then catalyzes the decarboxylation of 6-methylsalicylic acid to yield m-cresol (also known as 3-methylphenol). These first reactions occur in the cytosol. The intermediate m-cresol is then transported into the endoplasmic reticulum where the cytochrome P450 monooxygenase patH converts it to m-hydroxybenzyl alcohol, which is further converted to gentisyl alcohol by the cytochrome P450 monooxygenase patI. The oxidoreductases patJ and patO further convert gentisyl alcohol to isoepoxydon in the vacuole. PatN catalyzes then the transformation of isoepoxydon into phyllostine. The cluster protein patF is responsible for the conversion from phyllostine to neopatulin whereas the alcohol dehydrogenase patD converts neopatulin to E-ascladiol. The steps between isoepoxydon and E-ascladiol occur in the cytosol, and E-ascladiol is probably secreted to the extracellular space by one of the cluster-specific transporters patC or patM. Finally, the secreted patulin synthase patE catalyzes the conversion of E-ascladiol to patulin (Probable) (PubMed:19383676).</text>
</comment>
<comment type="cofactor">
    <cofactor evidence="9">
        <name>FAD</name>
        <dbReference type="ChEBI" id="CHEBI:57692"/>
    </cofactor>
</comment>
<comment type="pathway">
    <text evidence="10">Mycotoxin biosynthesis; patulin biosynthesis.</text>
</comment>
<comment type="subcellular location">
    <subcellularLocation>
        <location evidence="1">Vacuole lumen</location>
    </subcellularLocation>
</comment>
<comment type="biotechnology">
    <text evidence="5 6 7">Patulin was originally used as an antibiotic and specifically trialed to be used against the common cold, but it is no longer used for that purpose since it has been shown to induce immunological, neurological and gastrointestinal effects (PubMed:15082620). Genotoxic effects of patulin with dose-dependent increase in DNA strand breaks in brain, liver and kidneys have been detected in mice (PubMed:22222931). However, more recently, it has been proposed that patulin might also have anti-tumor properties (PubMed:26619846).</text>
</comment>
<comment type="similarity">
    <text evidence="9">Belongs to the oxygen-dependent FAD-linked oxidoreductase family.</text>
</comment>
<keyword id="KW-0274">FAD</keyword>
<keyword id="KW-0285">Flavoprotein</keyword>
<keyword id="KW-0325">Glycoprotein</keyword>
<keyword id="KW-0560">Oxidoreductase</keyword>
<keyword id="KW-1185">Reference proteome</keyword>
<keyword id="KW-0732">Signal</keyword>
<keyword id="KW-0926">Vacuole</keyword>
<name>PATO_ASPCL</name>
<organism>
    <name type="scientific">Aspergillus clavatus (strain ATCC 1007 / CBS 513.65 / DSM 816 / NCTC 3887 / NRRL 1 / QM 1276 / 107)</name>
    <dbReference type="NCBI Taxonomy" id="344612"/>
    <lineage>
        <taxon>Eukaryota</taxon>
        <taxon>Fungi</taxon>
        <taxon>Dikarya</taxon>
        <taxon>Ascomycota</taxon>
        <taxon>Pezizomycotina</taxon>
        <taxon>Eurotiomycetes</taxon>
        <taxon>Eurotiomycetidae</taxon>
        <taxon>Eurotiales</taxon>
        <taxon>Aspergillaceae</taxon>
        <taxon>Aspergillus</taxon>
        <taxon>Aspergillus subgen. Fumigati</taxon>
    </lineage>
</organism>
<proteinExistence type="evidence at protein level"/>
<protein>
    <recommendedName>
        <fullName evidence="8">FAD-linked oxidoreductase patO</fullName>
        <ecNumber evidence="1">1.-.-.-</ecNumber>
    </recommendedName>
    <alternativeName>
        <fullName evidence="8">Patulin synthesis protein O</fullName>
    </alternativeName>
</protein>
<reference key="1">
    <citation type="journal article" date="2008" name="PLoS Genet.">
        <title>Genomic islands in the pathogenic filamentous fungus Aspergillus fumigatus.</title>
        <authorList>
            <person name="Fedorova N.D."/>
            <person name="Khaldi N."/>
            <person name="Joardar V.S."/>
            <person name="Maiti R."/>
            <person name="Amedeo P."/>
            <person name="Anderson M.J."/>
            <person name="Crabtree J."/>
            <person name="Silva J.C."/>
            <person name="Badger J.H."/>
            <person name="Albarraq A."/>
            <person name="Angiuoli S."/>
            <person name="Bussey H."/>
            <person name="Bowyer P."/>
            <person name="Cotty P.J."/>
            <person name="Dyer P.S."/>
            <person name="Egan A."/>
            <person name="Galens K."/>
            <person name="Fraser-Liggett C.M."/>
            <person name="Haas B.J."/>
            <person name="Inman J.M."/>
            <person name="Kent R."/>
            <person name="Lemieux S."/>
            <person name="Malavazi I."/>
            <person name="Orvis J."/>
            <person name="Roemer T."/>
            <person name="Ronning C.M."/>
            <person name="Sundaram J.P."/>
            <person name="Sutton G."/>
            <person name="Turner G."/>
            <person name="Venter J.C."/>
            <person name="White O.R."/>
            <person name="Whitty B.R."/>
            <person name="Youngman P."/>
            <person name="Wolfe K.H."/>
            <person name="Goldman G.H."/>
            <person name="Wortman J.R."/>
            <person name="Jiang B."/>
            <person name="Denning D.W."/>
            <person name="Nierman W.C."/>
        </authorList>
    </citation>
    <scope>NUCLEOTIDE SEQUENCE [LARGE SCALE GENOMIC DNA]</scope>
    <source>
        <strain>ATCC 1007 / CBS 513.65 / DSM 816 / NCTC 3887 / NRRL 1 / QM 1276 / 107</strain>
    </source>
</reference>
<reference key="2">
    <citation type="journal article" date="2004" name="Int. J. Epidemiol.">
        <title>Clinical trial of patulin in the common cold. 1944.</title>
        <authorList>
            <consortium name="Patulin Clinical Trials Committee, Medical Research Council"/>
        </authorList>
    </citation>
    <scope>BIOTECHNOLOGY</scope>
</reference>
<reference key="3">
    <citation type="journal article" date="2009" name="Microbiology">
        <title>Molecular cloning and functional characterization of two CYP619 cytochrome P450s involved in biosynthesis of patulin in Aspergillus clavatus.</title>
        <authorList>
            <person name="Artigot M.P."/>
            <person name="Loiseau N."/>
            <person name="Laffitte J."/>
            <person name="Mas-Reguieg L."/>
            <person name="Tadrist S."/>
            <person name="Oswald I.P."/>
            <person name="Puel O."/>
        </authorList>
    </citation>
    <scope>FUNCTION</scope>
</reference>
<reference key="4">
    <citation type="journal article" date="2012" name="Food Chem. Toxicol.">
        <title>DNA damage in organs of mice treated acutely with patulin, a known mycotoxin.</title>
        <authorList>
            <person name="de Melo F.T."/>
            <person name="de Oliveira I.M."/>
            <person name="Greggio S."/>
            <person name="Dacosta J.C."/>
            <person name="Guecheva T.N."/>
            <person name="Saffi J."/>
            <person name="Henriques J.A."/>
            <person name="Rosa R.M."/>
        </authorList>
    </citation>
    <scope>BIOTECHNOLOGY</scope>
</reference>
<reference key="5">
    <citation type="journal article" date="2016" name="Tumor Biol.">
        <title>The potential effect of patulin on mice bearing melanoma cells: an anti-tumour or carcinogenic effect?</title>
        <authorList>
            <person name="Boussabbeh M."/>
            <person name="Ben Salem I."/>
            <person name="Rjiba-Touati K."/>
            <person name="Bouyahya C."/>
            <person name="Neffati F."/>
            <person name="Najjar M.F."/>
            <person name="Bacha H."/>
            <person name="Abid-Essefi S."/>
        </authorList>
    </citation>
    <scope>BIOTECHNOLOGY</scope>
</reference>
<dbReference type="EC" id="1.-.-.-" evidence="1"/>
<dbReference type="EMBL" id="DS027052">
    <property type="protein sequence ID" value="EAW11671.1"/>
    <property type="molecule type" value="Genomic_DNA"/>
</dbReference>
<dbReference type="RefSeq" id="XP_001273097.1">
    <property type="nucleotide sequence ID" value="XM_001273096.1"/>
</dbReference>
<dbReference type="SMR" id="A1CFM2"/>
<dbReference type="STRING" id="344612.A1CFM2"/>
<dbReference type="GlyCosmos" id="A1CFM2">
    <property type="glycosylation" value="10 sites, No reported glycans"/>
</dbReference>
<dbReference type="EnsemblFungi" id="EAW11671">
    <property type="protein sequence ID" value="EAW11671"/>
    <property type="gene ID" value="ACLA_093700"/>
</dbReference>
<dbReference type="GeneID" id="4704859"/>
<dbReference type="KEGG" id="act:ACLA_093700"/>
<dbReference type="VEuPathDB" id="FungiDB:ACLA_093700"/>
<dbReference type="eggNOG" id="ENOG502R8I5">
    <property type="taxonomic scope" value="Eukaryota"/>
</dbReference>
<dbReference type="HOGENOM" id="CLU_018354_4_2_1"/>
<dbReference type="OMA" id="RNAISHM"/>
<dbReference type="OrthoDB" id="9983560at2759"/>
<dbReference type="UniPathway" id="UPA00918"/>
<dbReference type="Proteomes" id="UP000006701">
    <property type="component" value="Unassembled WGS sequence"/>
</dbReference>
<dbReference type="GO" id="GO:0005775">
    <property type="term" value="C:vacuolar lumen"/>
    <property type="evidence" value="ECO:0007669"/>
    <property type="project" value="UniProtKB-SubCell"/>
</dbReference>
<dbReference type="GO" id="GO:0005773">
    <property type="term" value="C:vacuole"/>
    <property type="evidence" value="ECO:0000250"/>
    <property type="project" value="GO_Central"/>
</dbReference>
<dbReference type="GO" id="GO:0071949">
    <property type="term" value="F:FAD binding"/>
    <property type="evidence" value="ECO:0007669"/>
    <property type="project" value="InterPro"/>
</dbReference>
<dbReference type="GO" id="GO:0016491">
    <property type="term" value="F:oxidoreductase activity"/>
    <property type="evidence" value="ECO:0007669"/>
    <property type="project" value="UniProtKB-KW"/>
</dbReference>
<dbReference type="GO" id="GO:0140723">
    <property type="term" value="P:patulin biosynthetic process"/>
    <property type="evidence" value="ECO:0000315"/>
    <property type="project" value="GO_Central"/>
</dbReference>
<dbReference type="Gene3D" id="3.30.465.10">
    <property type="match status" value="2"/>
</dbReference>
<dbReference type="InterPro" id="IPR012951">
    <property type="entry name" value="BBE"/>
</dbReference>
<dbReference type="InterPro" id="IPR016166">
    <property type="entry name" value="FAD-bd_PCMH"/>
</dbReference>
<dbReference type="InterPro" id="IPR036318">
    <property type="entry name" value="FAD-bd_PCMH-like_sf"/>
</dbReference>
<dbReference type="InterPro" id="IPR016169">
    <property type="entry name" value="FAD-bd_PCMH_sub2"/>
</dbReference>
<dbReference type="InterPro" id="IPR050432">
    <property type="entry name" value="FAD-linked_Oxidoreductases_BP"/>
</dbReference>
<dbReference type="InterPro" id="IPR006094">
    <property type="entry name" value="Oxid_FAD_bind_N"/>
</dbReference>
<dbReference type="PANTHER" id="PTHR13878:SF91">
    <property type="entry name" value="FAD BINDING DOMAIN PROTEIN (AFU_ORTHOLOGUE AFUA_6G12070)-RELATED"/>
    <property type="match status" value="1"/>
</dbReference>
<dbReference type="PANTHER" id="PTHR13878">
    <property type="entry name" value="GULONOLACTONE OXIDASE"/>
    <property type="match status" value="1"/>
</dbReference>
<dbReference type="Pfam" id="PF08031">
    <property type="entry name" value="BBE"/>
    <property type="match status" value="1"/>
</dbReference>
<dbReference type="Pfam" id="PF01565">
    <property type="entry name" value="FAD_binding_4"/>
    <property type="match status" value="1"/>
</dbReference>
<dbReference type="SUPFAM" id="SSF56176">
    <property type="entry name" value="FAD-binding/transporter-associated domain-like"/>
    <property type="match status" value="1"/>
</dbReference>
<dbReference type="PROSITE" id="PS51387">
    <property type="entry name" value="FAD_PCMH"/>
    <property type="match status" value="1"/>
</dbReference>
<feature type="signal peptide" evidence="2">
    <location>
        <begin position="1"/>
        <end position="23"/>
    </location>
</feature>
<feature type="chain" id="PRO_5002633132" description="FAD-linked oxidoreductase patO" evidence="2">
    <location>
        <begin position="24"/>
        <end position="572"/>
    </location>
</feature>
<feature type="domain" description="FAD-binding PCMH-type" evidence="4">
    <location>
        <begin position="115"/>
        <end position="295"/>
    </location>
</feature>
<feature type="glycosylation site" description="N-linked (GlcNAc...) asparagine" evidence="3">
    <location>
        <position position="48"/>
    </location>
</feature>
<feature type="glycosylation site" description="N-linked (GlcNAc...) asparagine" evidence="3">
    <location>
        <position position="71"/>
    </location>
</feature>
<feature type="glycosylation site" description="N-linked (GlcNAc...) asparagine" evidence="3">
    <location>
        <position position="126"/>
    </location>
</feature>
<feature type="glycosylation site" description="N-linked (GlcNAc...) asparagine" evidence="3">
    <location>
        <position position="180"/>
    </location>
</feature>
<feature type="glycosylation site" description="N-linked (GlcNAc...) asparagine" evidence="3">
    <location>
        <position position="309"/>
    </location>
</feature>
<feature type="glycosylation site" description="N-linked (GlcNAc...) asparagine" evidence="3">
    <location>
        <position position="354"/>
    </location>
</feature>
<feature type="glycosylation site" description="N-linked (GlcNAc...) asparagine" evidence="3">
    <location>
        <position position="381"/>
    </location>
</feature>
<feature type="glycosylation site" description="N-linked (GlcNAc...) asparagine" evidence="3">
    <location>
        <position position="422"/>
    </location>
</feature>
<feature type="glycosylation site" description="N-linked (GlcNAc...) asparagine" evidence="3">
    <location>
        <position position="446"/>
    </location>
</feature>
<feature type="glycosylation site" description="N-linked (GlcNAc...) asparagine" evidence="3">
    <location>
        <position position="481"/>
    </location>
</feature>
<evidence type="ECO:0000250" key="1">
    <source>
        <dbReference type="UniProtKB" id="A0A075TR33"/>
    </source>
</evidence>
<evidence type="ECO:0000255" key="2"/>
<evidence type="ECO:0000255" key="3">
    <source>
        <dbReference type="PROSITE-ProRule" id="PRU00498"/>
    </source>
</evidence>
<evidence type="ECO:0000255" key="4">
    <source>
        <dbReference type="PROSITE-ProRule" id="PRU00718"/>
    </source>
</evidence>
<evidence type="ECO:0000269" key="5">
    <source>
    </source>
</evidence>
<evidence type="ECO:0000269" key="6">
    <source>
    </source>
</evidence>
<evidence type="ECO:0000269" key="7">
    <source>
    </source>
</evidence>
<evidence type="ECO:0000303" key="8">
    <source>
    </source>
</evidence>
<evidence type="ECO:0000305" key="9"/>
<evidence type="ECO:0000305" key="10">
    <source>
    </source>
</evidence>
<accession>A1CFM2</accession>
<sequence>MRLSIYSSILLLRAMCLVRPTFGFPATTCRCMPGDSCWPSSTDWAHFNASIGGRLIATQPLAQACHDPYYNETECQYLQKHWTLPALHDISPSSIMAAAVAKDTCDAFTPRSKPCAPGDMVVYSVNASSPDDFSRTIRFSQQRNIRLVIRNTGHDYLGKSTGAGALSIWTHYLKDIEFVNYTSSSYTGPAFTMAAGVQGSDIYNVANGRGLVVVGGECASVGPVGGYTQGGGHSALSSRFGLAADQVLEWQVVDGTGRLLTASPTQNPDLYWALSGGGGGTYGVVYSMTVKAFPDFPVTGVVLQFDTKNTSSKDFFQAVSYYHRDLPTYTAAGGMAIAQITRSSFLLTPLTLPNKTTEEARSLIAPFIHELETLHIPYQLNITQSATYLEHYKKLIEPNPTQLVQNGQYGGRLLPLNVIESNNTQLTEAVKTITQDGVVFVGIGLNVSSSVVGDVWNSVLPAWRTAALSVLLSTDWPAGANRSTMKTLADRMTSKWVPILTALSPDSGCYMNEADPQQPDWPQTFYGRNYETLYAIKKRYDPFDTFYASTAVGSGDWQVKTDGRLCRVKGNT</sequence>
<gene>
    <name evidence="8" type="primary">patO</name>
    <name type="ORF">ACLA_093700</name>
</gene>